<gene>
    <name evidence="1" type="primary">mtnN</name>
    <name type="ordered locus">SPA0213</name>
</gene>
<proteinExistence type="inferred from homology"/>
<accession>Q5PD46</accession>
<evidence type="ECO:0000255" key="1">
    <source>
        <dbReference type="HAMAP-Rule" id="MF_01684"/>
    </source>
</evidence>
<organism>
    <name type="scientific">Salmonella paratyphi A (strain ATCC 9150 / SARB42)</name>
    <dbReference type="NCBI Taxonomy" id="295319"/>
    <lineage>
        <taxon>Bacteria</taxon>
        <taxon>Pseudomonadati</taxon>
        <taxon>Pseudomonadota</taxon>
        <taxon>Gammaproteobacteria</taxon>
        <taxon>Enterobacterales</taxon>
        <taxon>Enterobacteriaceae</taxon>
        <taxon>Salmonella</taxon>
    </lineage>
</organism>
<keyword id="KW-0028">Amino-acid biosynthesis</keyword>
<keyword id="KW-0378">Hydrolase</keyword>
<keyword id="KW-0486">Methionine biosynthesis</keyword>
<feature type="chain" id="PRO_0000359334" description="5'-methylthioadenosine/S-adenosylhomocysteine nucleosidase">
    <location>
        <begin position="1"/>
        <end position="232"/>
    </location>
</feature>
<feature type="active site" description="Proton acceptor" evidence="1">
    <location>
        <position position="12"/>
    </location>
</feature>
<feature type="active site" description="Proton donor" evidence="1">
    <location>
        <position position="197"/>
    </location>
</feature>
<feature type="binding site" evidence="1">
    <location>
        <position position="78"/>
    </location>
    <ligand>
        <name>substrate</name>
    </ligand>
</feature>
<feature type="binding site" evidence="1">
    <location>
        <position position="152"/>
    </location>
    <ligand>
        <name>substrate</name>
    </ligand>
</feature>
<feature type="binding site" evidence="1">
    <location>
        <begin position="173"/>
        <end position="174"/>
    </location>
    <ligand>
        <name>substrate</name>
    </ligand>
</feature>
<name>MTNN_SALPA</name>
<dbReference type="EC" id="3.2.2.9" evidence="1"/>
<dbReference type="EMBL" id="CP000026">
    <property type="protein sequence ID" value="AAV76243.1"/>
    <property type="molecule type" value="Genomic_DNA"/>
</dbReference>
<dbReference type="RefSeq" id="WP_000689828.1">
    <property type="nucleotide sequence ID" value="NC_006511.1"/>
</dbReference>
<dbReference type="SMR" id="Q5PD46"/>
<dbReference type="KEGG" id="spt:SPA0213"/>
<dbReference type="HOGENOM" id="CLU_031248_2_2_6"/>
<dbReference type="UniPathway" id="UPA00904">
    <property type="reaction ID" value="UER00871"/>
</dbReference>
<dbReference type="Proteomes" id="UP000008185">
    <property type="component" value="Chromosome"/>
</dbReference>
<dbReference type="GO" id="GO:0005829">
    <property type="term" value="C:cytosol"/>
    <property type="evidence" value="ECO:0007669"/>
    <property type="project" value="TreeGrafter"/>
</dbReference>
<dbReference type="GO" id="GO:0008782">
    <property type="term" value="F:adenosylhomocysteine nucleosidase activity"/>
    <property type="evidence" value="ECO:0007669"/>
    <property type="project" value="UniProtKB-UniRule"/>
</dbReference>
<dbReference type="GO" id="GO:0008930">
    <property type="term" value="F:methylthioadenosine nucleosidase activity"/>
    <property type="evidence" value="ECO:0007669"/>
    <property type="project" value="UniProtKB-UniRule"/>
</dbReference>
<dbReference type="GO" id="GO:0019509">
    <property type="term" value="P:L-methionine salvage from methylthioadenosine"/>
    <property type="evidence" value="ECO:0007669"/>
    <property type="project" value="UniProtKB-UniRule"/>
</dbReference>
<dbReference type="GO" id="GO:0019284">
    <property type="term" value="P:L-methionine salvage from S-adenosylmethionine"/>
    <property type="evidence" value="ECO:0007669"/>
    <property type="project" value="TreeGrafter"/>
</dbReference>
<dbReference type="GO" id="GO:0046124">
    <property type="term" value="P:purine deoxyribonucleoside catabolic process"/>
    <property type="evidence" value="ECO:0007669"/>
    <property type="project" value="UniProtKB-UniRule"/>
</dbReference>
<dbReference type="CDD" id="cd09008">
    <property type="entry name" value="MTAN"/>
    <property type="match status" value="1"/>
</dbReference>
<dbReference type="FunFam" id="3.40.50.1580:FF:000001">
    <property type="entry name" value="MTA/SAH nucleosidase family protein"/>
    <property type="match status" value="1"/>
</dbReference>
<dbReference type="Gene3D" id="3.40.50.1580">
    <property type="entry name" value="Nucleoside phosphorylase domain"/>
    <property type="match status" value="1"/>
</dbReference>
<dbReference type="HAMAP" id="MF_01684">
    <property type="entry name" value="Salvage_MtnN"/>
    <property type="match status" value="1"/>
</dbReference>
<dbReference type="InterPro" id="IPR010049">
    <property type="entry name" value="MTA_SAH_Nsdase"/>
</dbReference>
<dbReference type="InterPro" id="IPR000845">
    <property type="entry name" value="Nucleoside_phosphorylase_d"/>
</dbReference>
<dbReference type="InterPro" id="IPR035994">
    <property type="entry name" value="Nucleoside_phosphorylase_sf"/>
</dbReference>
<dbReference type="NCBIfam" id="TIGR01704">
    <property type="entry name" value="MTA_SAH-Nsdase"/>
    <property type="match status" value="1"/>
</dbReference>
<dbReference type="NCBIfam" id="NF004079">
    <property type="entry name" value="PRK05584.1"/>
    <property type="match status" value="1"/>
</dbReference>
<dbReference type="PANTHER" id="PTHR46832">
    <property type="entry name" value="5'-METHYLTHIOADENOSINE/S-ADENOSYLHOMOCYSTEINE NUCLEOSIDASE"/>
    <property type="match status" value="1"/>
</dbReference>
<dbReference type="PANTHER" id="PTHR46832:SF1">
    <property type="entry name" value="5'-METHYLTHIOADENOSINE_S-ADENOSYLHOMOCYSTEINE NUCLEOSIDASE"/>
    <property type="match status" value="1"/>
</dbReference>
<dbReference type="Pfam" id="PF01048">
    <property type="entry name" value="PNP_UDP_1"/>
    <property type="match status" value="1"/>
</dbReference>
<dbReference type="SUPFAM" id="SSF53167">
    <property type="entry name" value="Purine and uridine phosphorylases"/>
    <property type="match status" value="1"/>
</dbReference>
<sequence>MKIGIIGAMEEEVTLLRDKIDNRQTITLGGCEIYTGQLNGTEVALLKSGIGKVAAALGATLLLGHCKPDVIINTGSAGGLASTLKVGDIVVSDEARYHDADVTAFGYEYGQLPGCPAGFKADDKLIAAAESCIRELNLNAVRGLIVSGDAFINGSVGLAKIRHNFPDAVAVEMEATAIAHVCHNFNVPFVVVRAISDVADQQSHLSFDEFLAVAAKQSTLMVETLVQKLAHG</sequence>
<comment type="function">
    <text evidence="1">Catalyzes the irreversible cleavage of the glycosidic bond in both 5'-methylthioadenosine (MTA) and S-adenosylhomocysteine (SAH/AdoHcy) to adenine and the corresponding thioribose, 5'-methylthioribose and S-ribosylhomocysteine, respectively. Also cleaves 5'-deoxyadenosine, a toxic by-product of radical S-adenosylmethionine (SAM) enzymes, into 5-deoxyribose and adenine. Thus, is required for in vivo function of the radical SAM enzymes biotin synthase and lipoic acid synthase, that are inhibited by 5'-deoxyadenosine accumulation.</text>
</comment>
<comment type="catalytic activity">
    <reaction evidence="1">
        <text>S-adenosyl-L-homocysteine + H2O = S-(5-deoxy-D-ribos-5-yl)-L-homocysteine + adenine</text>
        <dbReference type="Rhea" id="RHEA:17805"/>
        <dbReference type="ChEBI" id="CHEBI:15377"/>
        <dbReference type="ChEBI" id="CHEBI:16708"/>
        <dbReference type="ChEBI" id="CHEBI:57856"/>
        <dbReference type="ChEBI" id="CHEBI:58195"/>
        <dbReference type="EC" id="3.2.2.9"/>
    </reaction>
</comment>
<comment type="catalytic activity">
    <reaction evidence="1">
        <text>S-methyl-5'-thioadenosine + H2O = 5-(methylsulfanyl)-D-ribose + adenine</text>
        <dbReference type="Rhea" id="RHEA:13617"/>
        <dbReference type="ChEBI" id="CHEBI:15377"/>
        <dbReference type="ChEBI" id="CHEBI:16708"/>
        <dbReference type="ChEBI" id="CHEBI:17509"/>
        <dbReference type="ChEBI" id="CHEBI:78440"/>
        <dbReference type="EC" id="3.2.2.9"/>
    </reaction>
</comment>
<comment type="catalytic activity">
    <reaction evidence="1">
        <text>5'-deoxyadenosine + H2O = 5-deoxy-D-ribose + adenine</text>
        <dbReference type="Rhea" id="RHEA:29859"/>
        <dbReference type="ChEBI" id="CHEBI:15377"/>
        <dbReference type="ChEBI" id="CHEBI:16708"/>
        <dbReference type="ChEBI" id="CHEBI:17319"/>
        <dbReference type="ChEBI" id="CHEBI:149540"/>
        <dbReference type="EC" id="3.2.2.9"/>
    </reaction>
    <physiologicalReaction direction="left-to-right" evidence="1">
        <dbReference type="Rhea" id="RHEA:29860"/>
    </physiologicalReaction>
</comment>
<comment type="pathway">
    <text evidence="1">Amino-acid biosynthesis; L-methionine biosynthesis via salvage pathway; S-methyl-5-thio-alpha-D-ribose 1-phosphate from S-methyl-5'-thioadenosine (hydrolase route): step 1/2.</text>
</comment>
<comment type="subunit">
    <text evidence="1">Homodimer.</text>
</comment>
<comment type="similarity">
    <text evidence="1">Belongs to the PNP/UDP phosphorylase family. MtnN subfamily.</text>
</comment>
<reference key="1">
    <citation type="journal article" date="2004" name="Nat. Genet.">
        <title>Comparison of genome degradation in Paratyphi A and Typhi, human-restricted serovars of Salmonella enterica that cause typhoid.</title>
        <authorList>
            <person name="McClelland M."/>
            <person name="Sanderson K.E."/>
            <person name="Clifton S.W."/>
            <person name="Latreille P."/>
            <person name="Porwollik S."/>
            <person name="Sabo A."/>
            <person name="Meyer R."/>
            <person name="Bieri T."/>
            <person name="Ozersky P."/>
            <person name="McLellan M."/>
            <person name="Harkins C.R."/>
            <person name="Wang C."/>
            <person name="Nguyen C."/>
            <person name="Berghoff A."/>
            <person name="Elliott G."/>
            <person name="Kohlberg S."/>
            <person name="Strong C."/>
            <person name="Du F."/>
            <person name="Carter J."/>
            <person name="Kremizki C."/>
            <person name="Layman D."/>
            <person name="Leonard S."/>
            <person name="Sun H."/>
            <person name="Fulton L."/>
            <person name="Nash W."/>
            <person name="Miner T."/>
            <person name="Minx P."/>
            <person name="Delehaunty K."/>
            <person name="Fronick C."/>
            <person name="Magrini V."/>
            <person name="Nhan M."/>
            <person name="Warren W."/>
            <person name="Florea L."/>
            <person name="Spieth J."/>
            <person name="Wilson R.K."/>
        </authorList>
    </citation>
    <scope>NUCLEOTIDE SEQUENCE [LARGE SCALE GENOMIC DNA]</scope>
    <source>
        <strain>ATCC 9150 / SARB42</strain>
    </source>
</reference>
<protein>
    <recommendedName>
        <fullName evidence="1">5'-methylthioadenosine/S-adenosylhomocysteine nucleosidase</fullName>
        <shortName evidence="1">MTA/SAH nucleosidase</shortName>
        <shortName evidence="1">MTAN</shortName>
        <ecNumber evidence="1">3.2.2.9</ecNumber>
    </recommendedName>
    <alternativeName>
        <fullName evidence="1">5'-deoxyadenosine nucleosidase</fullName>
        <shortName evidence="1">DOA nucleosidase</shortName>
        <shortName evidence="1">dAdo nucleosidase</shortName>
    </alternativeName>
    <alternativeName>
        <fullName evidence="1">5'-methylthioadenosine nucleosidase</fullName>
        <shortName evidence="1">MTA nucleosidase</shortName>
    </alternativeName>
    <alternativeName>
        <fullName evidence="1">S-adenosylhomocysteine nucleosidase</fullName>
        <shortName evidence="1">AdoHcy nucleosidase</shortName>
        <shortName evidence="1">SAH nucleosidase</shortName>
        <shortName evidence="1">SRH nucleosidase</shortName>
    </alternativeName>
</protein>